<gene>
    <name evidence="1" type="primary">rhlB</name>
    <name type="ordered locus">PMI3312</name>
</gene>
<comment type="function">
    <text evidence="1">DEAD-box RNA helicase involved in RNA degradation. Has RNA-dependent ATPase activity and unwinds double-stranded RNA.</text>
</comment>
<comment type="catalytic activity">
    <reaction evidence="1">
        <text>ATP + H2O = ADP + phosphate + H(+)</text>
        <dbReference type="Rhea" id="RHEA:13065"/>
        <dbReference type="ChEBI" id="CHEBI:15377"/>
        <dbReference type="ChEBI" id="CHEBI:15378"/>
        <dbReference type="ChEBI" id="CHEBI:30616"/>
        <dbReference type="ChEBI" id="CHEBI:43474"/>
        <dbReference type="ChEBI" id="CHEBI:456216"/>
        <dbReference type="EC" id="3.6.4.13"/>
    </reaction>
</comment>
<comment type="subunit">
    <text evidence="1">Component of the RNA degradosome, which is a multiprotein complex involved in RNA processing and mRNA degradation.</text>
</comment>
<comment type="subcellular location">
    <subcellularLocation>
        <location evidence="1">Cytoplasm</location>
    </subcellularLocation>
</comment>
<comment type="similarity">
    <text evidence="1">Belongs to the DEAD box helicase family. RhlB subfamily.</text>
</comment>
<reference key="1">
    <citation type="journal article" date="2008" name="J. Bacteriol.">
        <title>Complete genome sequence of uropathogenic Proteus mirabilis, a master of both adherence and motility.</title>
        <authorList>
            <person name="Pearson M.M."/>
            <person name="Sebaihia M."/>
            <person name="Churcher C."/>
            <person name="Quail M.A."/>
            <person name="Seshasayee A.S."/>
            <person name="Luscombe N.M."/>
            <person name="Abdellah Z."/>
            <person name="Arrosmith C."/>
            <person name="Atkin B."/>
            <person name="Chillingworth T."/>
            <person name="Hauser H."/>
            <person name="Jagels K."/>
            <person name="Moule S."/>
            <person name="Mungall K."/>
            <person name="Norbertczak H."/>
            <person name="Rabbinowitsch E."/>
            <person name="Walker D."/>
            <person name="Whithead S."/>
            <person name="Thomson N.R."/>
            <person name="Rather P.N."/>
            <person name="Parkhill J."/>
            <person name="Mobley H.L.T."/>
        </authorList>
    </citation>
    <scope>NUCLEOTIDE SEQUENCE [LARGE SCALE GENOMIC DNA]</scope>
    <source>
        <strain>HI4320</strain>
    </source>
</reference>
<accession>B4F1V3</accession>
<proteinExistence type="inferred from homology"/>
<sequence length="432" mass="48918">MSKTYLTEKKFSDFALHPKVIEALEKKGFSNCTQIQALTLPITVKGHDIAGQAQTGTGKTLAFLTSTFHYLLTHPAKEGHEKNQPRALIMAPTRELAVQIYTDAQPLAQSTGVKMGLAYGGDGYDEQLKVLNNGVDIVIGTTGRLIDYVKQGHINLNAIQVVVLDEADRMYDLGFIKDIRWLFRRMPNAAERMNMLFSATLSYRVRELAFEQMNNPEYVEVEPEQKTGFSIKEELFYPSNEEKMRLLQTLIEEEWPERCIIFANTKHRCDDIWAHLAADGHRVGLLTGDVPQKKRLRILEDFTQGNIDILVATDVAARGLHIPSVTHVFNYDLPDDCEDYVHRIGRTGRAGKSGNSISLACEEYALNLPAIETYIQHAIPVSKYNSDALLTDLPEPKRRHRPRQGQPRRNNSAPRRGNNTQRNNRNKRPSHS</sequence>
<protein>
    <recommendedName>
        <fullName evidence="1">ATP-dependent RNA helicase RhlB</fullName>
        <ecNumber evidence="1">3.6.4.13</ecNumber>
    </recommendedName>
</protein>
<dbReference type="EC" id="3.6.4.13" evidence="1"/>
<dbReference type="EMBL" id="AM942759">
    <property type="protein sequence ID" value="CAR46501.1"/>
    <property type="molecule type" value="Genomic_DNA"/>
</dbReference>
<dbReference type="RefSeq" id="WP_004246356.1">
    <property type="nucleotide sequence ID" value="NC_010554.1"/>
</dbReference>
<dbReference type="SMR" id="B4F1V3"/>
<dbReference type="EnsemblBacteria" id="CAR46501">
    <property type="protein sequence ID" value="CAR46501"/>
    <property type="gene ID" value="PMI3312"/>
</dbReference>
<dbReference type="GeneID" id="6800972"/>
<dbReference type="KEGG" id="pmr:PMI3312"/>
<dbReference type="eggNOG" id="COG0513">
    <property type="taxonomic scope" value="Bacteria"/>
</dbReference>
<dbReference type="HOGENOM" id="CLU_003041_1_3_6"/>
<dbReference type="Proteomes" id="UP000008319">
    <property type="component" value="Chromosome"/>
</dbReference>
<dbReference type="GO" id="GO:0005829">
    <property type="term" value="C:cytosol"/>
    <property type="evidence" value="ECO:0007669"/>
    <property type="project" value="TreeGrafter"/>
</dbReference>
<dbReference type="GO" id="GO:0005524">
    <property type="term" value="F:ATP binding"/>
    <property type="evidence" value="ECO:0007669"/>
    <property type="project" value="UniProtKB-UniRule"/>
</dbReference>
<dbReference type="GO" id="GO:0016887">
    <property type="term" value="F:ATP hydrolysis activity"/>
    <property type="evidence" value="ECO:0007669"/>
    <property type="project" value="RHEA"/>
</dbReference>
<dbReference type="GO" id="GO:0003723">
    <property type="term" value="F:RNA binding"/>
    <property type="evidence" value="ECO:0007669"/>
    <property type="project" value="UniProtKB-UniRule"/>
</dbReference>
<dbReference type="GO" id="GO:0003724">
    <property type="term" value="F:RNA helicase activity"/>
    <property type="evidence" value="ECO:0007669"/>
    <property type="project" value="UniProtKB-UniRule"/>
</dbReference>
<dbReference type="GO" id="GO:0006401">
    <property type="term" value="P:RNA catabolic process"/>
    <property type="evidence" value="ECO:0007669"/>
    <property type="project" value="UniProtKB-UniRule"/>
</dbReference>
<dbReference type="CDD" id="cd00268">
    <property type="entry name" value="DEADc"/>
    <property type="match status" value="1"/>
</dbReference>
<dbReference type="CDD" id="cd18787">
    <property type="entry name" value="SF2_C_DEAD"/>
    <property type="match status" value="1"/>
</dbReference>
<dbReference type="FunFam" id="3.40.50.300:FF:000312">
    <property type="entry name" value="ATP-dependent RNA helicase RhlB"/>
    <property type="match status" value="1"/>
</dbReference>
<dbReference type="Gene3D" id="3.40.50.300">
    <property type="entry name" value="P-loop containing nucleotide triphosphate hydrolases"/>
    <property type="match status" value="2"/>
</dbReference>
<dbReference type="HAMAP" id="MF_00661">
    <property type="entry name" value="DEAD_helicase_RhlB"/>
    <property type="match status" value="1"/>
</dbReference>
<dbReference type="InterPro" id="IPR011545">
    <property type="entry name" value="DEAD/DEAH_box_helicase_dom"/>
</dbReference>
<dbReference type="InterPro" id="IPR050079">
    <property type="entry name" value="DEAD_box_RNA_helicase"/>
</dbReference>
<dbReference type="InterPro" id="IPR014001">
    <property type="entry name" value="Helicase_ATP-bd"/>
</dbReference>
<dbReference type="InterPro" id="IPR001650">
    <property type="entry name" value="Helicase_C-like"/>
</dbReference>
<dbReference type="InterPro" id="IPR027417">
    <property type="entry name" value="P-loop_NTPase"/>
</dbReference>
<dbReference type="InterPro" id="IPR000629">
    <property type="entry name" value="RNA-helicase_DEAD-box_CS"/>
</dbReference>
<dbReference type="InterPro" id="IPR023554">
    <property type="entry name" value="RNA_helicase_ATP-dep_RhlB"/>
</dbReference>
<dbReference type="InterPro" id="IPR014014">
    <property type="entry name" value="RNA_helicase_DEAD_Q_motif"/>
</dbReference>
<dbReference type="NCBIfam" id="NF003419">
    <property type="entry name" value="PRK04837.1"/>
    <property type="match status" value="1"/>
</dbReference>
<dbReference type="PANTHER" id="PTHR47959:SF10">
    <property type="entry name" value="ATP-DEPENDENT RNA HELICASE RHLB"/>
    <property type="match status" value="1"/>
</dbReference>
<dbReference type="PANTHER" id="PTHR47959">
    <property type="entry name" value="ATP-DEPENDENT RNA HELICASE RHLE-RELATED"/>
    <property type="match status" value="1"/>
</dbReference>
<dbReference type="Pfam" id="PF00270">
    <property type="entry name" value="DEAD"/>
    <property type="match status" value="1"/>
</dbReference>
<dbReference type="Pfam" id="PF00271">
    <property type="entry name" value="Helicase_C"/>
    <property type="match status" value="1"/>
</dbReference>
<dbReference type="SMART" id="SM00487">
    <property type="entry name" value="DEXDc"/>
    <property type="match status" value="1"/>
</dbReference>
<dbReference type="SMART" id="SM00490">
    <property type="entry name" value="HELICc"/>
    <property type="match status" value="1"/>
</dbReference>
<dbReference type="SUPFAM" id="SSF52540">
    <property type="entry name" value="P-loop containing nucleoside triphosphate hydrolases"/>
    <property type="match status" value="1"/>
</dbReference>
<dbReference type="PROSITE" id="PS00039">
    <property type="entry name" value="DEAD_ATP_HELICASE"/>
    <property type="match status" value="1"/>
</dbReference>
<dbReference type="PROSITE" id="PS51192">
    <property type="entry name" value="HELICASE_ATP_BIND_1"/>
    <property type="match status" value="1"/>
</dbReference>
<dbReference type="PROSITE" id="PS51194">
    <property type="entry name" value="HELICASE_CTER"/>
    <property type="match status" value="1"/>
</dbReference>
<dbReference type="PROSITE" id="PS51195">
    <property type="entry name" value="Q_MOTIF"/>
    <property type="match status" value="1"/>
</dbReference>
<keyword id="KW-0067">ATP-binding</keyword>
<keyword id="KW-0963">Cytoplasm</keyword>
<keyword id="KW-0347">Helicase</keyword>
<keyword id="KW-0378">Hydrolase</keyword>
<keyword id="KW-0547">Nucleotide-binding</keyword>
<keyword id="KW-1185">Reference proteome</keyword>
<keyword id="KW-0694">RNA-binding</keyword>
<evidence type="ECO:0000255" key="1">
    <source>
        <dbReference type="HAMAP-Rule" id="MF_00661"/>
    </source>
</evidence>
<evidence type="ECO:0000256" key="2">
    <source>
        <dbReference type="SAM" id="MobiDB-lite"/>
    </source>
</evidence>
<organism>
    <name type="scientific">Proteus mirabilis (strain HI4320)</name>
    <dbReference type="NCBI Taxonomy" id="529507"/>
    <lineage>
        <taxon>Bacteria</taxon>
        <taxon>Pseudomonadati</taxon>
        <taxon>Pseudomonadota</taxon>
        <taxon>Gammaproteobacteria</taxon>
        <taxon>Enterobacterales</taxon>
        <taxon>Morganellaceae</taxon>
        <taxon>Proteus</taxon>
    </lineage>
</organism>
<feature type="chain" id="PRO_1000131297" description="ATP-dependent RNA helicase RhlB">
    <location>
        <begin position="1"/>
        <end position="432"/>
    </location>
</feature>
<feature type="domain" description="Helicase ATP-binding" evidence="1">
    <location>
        <begin position="40"/>
        <end position="219"/>
    </location>
</feature>
<feature type="domain" description="Helicase C-terminal" evidence="1">
    <location>
        <begin position="245"/>
        <end position="390"/>
    </location>
</feature>
<feature type="region of interest" description="Disordered" evidence="2">
    <location>
        <begin position="393"/>
        <end position="432"/>
    </location>
</feature>
<feature type="short sequence motif" description="Q motif">
    <location>
        <begin position="9"/>
        <end position="37"/>
    </location>
</feature>
<feature type="short sequence motif" description="DEAD box">
    <location>
        <begin position="165"/>
        <end position="168"/>
    </location>
</feature>
<feature type="compositionally biased region" description="Low complexity" evidence="2">
    <location>
        <begin position="404"/>
        <end position="423"/>
    </location>
</feature>
<feature type="binding site" evidence="1">
    <location>
        <begin position="53"/>
        <end position="60"/>
    </location>
    <ligand>
        <name>ATP</name>
        <dbReference type="ChEBI" id="CHEBI:30616"/>
    </ligand>
</feature>
<name>RHLB_PROMH</name>